<gene>
    <name evidence="1" type="primary">fbp</name>
    <name type="ordered locus">RPC_2899</name>
</gene>
<accession>Q213I9</accession>
<sequence length="344" mass="36944">MHQGLTLSRHTNEYAGTDKLRLAVAAAIDAIAAASIDISELIGRGPLAGITGEAQGSSNADGDVQKDLDVRCDEMILAGLQKIPYAALASEESETLVLGDPGAPISVAFDPLDGSSNIDTNMTVGTIFSIVPNKQGEAPFSAPGNVQLAAGFVVYGPQTSLVLTLGNGVDIFTLDRRDRTYKCIRQQVQIPEHTAEFAINASNHRHWEQPVRDFVEECLAGADGPRSKDFNMRWIGSLVAEAYRILTRGGIFLYPGDSRPGYGDGRLRLLYECHPMAFIIEQAGGGASTGRERVLDLAAKSIHQRAPLIMGSVDKVQRIELLHNDPAAATITAPLFGHRGLFRV</sequence>
<dbReference type="EC" id="3.1.3.11" evidence="1"/>
<dbReference type="EMBL" id="CP000301">
    <property type="protein sequence ID" value="ABD88447.1"/>
    <property type="molecule type" value="Genomic_DNA"/>
</dbReference>
<dbReference type="SMR" id="Q213I9"/>
<dbReference type="STRING" id="316056.RPC_2899"/>
<dbReference type="KEGG" id="rpc:RPC_2899"/>
<dbReference type="eggNOG" id="COG0158">
    <property type="taxonomic scope" value="Bacteria"/>
</dbReference>
<dbReference type="HOGENOM" id="CLU_039977_0_0_5"/>
<dbReference type="OrthoDB" id="9806756at2"/>
<dbReference type="UniPathway" id="UPA00116"/>
<dbReference type="GO" id="GO:0005829">
    <property type="term" value="C:cytosol"/>
    <property type="evidence" value="ECO:0007669"/>
    <property type="project" value="TreeGrafter"/>
</dbReference>
<dbReference type="GO" id="GO:0042132">
    <property type="term" value="F:fructose 1,6-bisphosphate 1-phosphatase activity"/>
    <property type="evidence" value="ECO:0007669"/>
    <property type="project" value="UniProtKB-UniRule"/>
</dbReference>
<dbReference type="GO" id="GO:0000287">
    <property type="term" value="F:magnesium ion binding"/>
    <property type="evidence" value="ECO:0007669"/>
    <property type="project" value="UniProtKB-UniRule"/>
</dbReference>
<dbReference type="GO" id="GO:0030388">
    <property type="term" value="P:fructose 1,6-bisphosphate metabolic process"/>
    <property type="evidence" value="ECO:0007669"/>
    <property type="project" value="TreeGrafter"/>
</dbReference>
<dbReference type="GO" id="GO:0006002">
    <property type="term" value="P:fructose 6-phosphate metabolic process"/>
    <property type="evidence" value="ECO:0007669"/>
    <property type="project" value="TreeGrafter"/>
</dbReference>
<dbReference type="GO" id="GO:0006000">
    <property type="term" value="P:fructose metabolic process"/>
    <property type="evidence" value="ECO:0007669"/>
    <property type="project" value="TreeGrafter"/>
</dbReference>
<dbReference type="GO" id="GO:0006094">
    <property type="term" value="P:gluconeogenesis"/>
    <property type="evidence" value="ECO:0007669"/>
    <property type="project" value="UniProtKB-UniRule"/>
</dbReference>
<dbReference type="GO" id="GO:0019253">
    <property type="term" value="P:reductive pentose-phosphate cycle"/>
    <property type="evidence" value="ECO:0007669"/>
    <property type="project" value="UniProtKB-UniPathway"/>
</dbReference>
<dbReference type="GO" id="GO:0005986">
    <property type="term" value="P:sucrose biosynthetic process"/>
    <property type="evidence" value="ECO:0007669"/>
    <property type="project" value="TreeGrafter"/>
</dbReference>
<dbReference type="CDD" id="cd00354">
    <property type="entry name" value="FBPase"/>
    <property type="match status" value="1"/>
</dbReference>
<dbReference type="FunFam" id="3.40.190.80:FF:000011">
    <property type="entry name" value="Fructose-1,6-bisphosphatase class 1"/>
    <property type="match status" value="1"/>
</dbReference>
<dbReference type="Gene3D" id="3.40.190.80">
    <property type="match status" value="1"/>
</dbReference>
<dbReference type="Gene3D" id="3.30.540.10">
    <property type="entry name" value="Fructose-1,6-Bisphosphatase, subunit A, domain 1"/>
    <property type="match status" value="1"/>
</dbReference>
<dbReference type="HAMAP" id="MF_01855">
    <property type="entry name" value="FBPase_class1"/>
    <property type="match status" value="1"/>
</dbReference>
<dbReference type="InterPro" id="IPR044015">
    <property type="entry name" value="FBPase_C_dom"/>
</dbReference>
<dbReference type="InterPro" id="IPR000146">
    <property type="entry name" value="FBPase_class-1"/>
</dbReference>
<dbReference type="InterPro" id="IPR033391">
    <property type="entry name" value="FBPase_N"/>
</dbReference>
<dbReference type="InterPro" id="IPR028343">
    <property type="entry name" value="FBPtase"/>
</dbReference>
<dbReference type="InterPro" id="IPR020548">
    <property type="entry name" value="Fructose_bisphosphatase_AS"/>
</dbReference>
<dbReference type="NCBIfam" id="NF006779">
    <property type="entry name" value="PRK09293.1-3"/>
    <property type="match status" value="1"/>
</dbReference>
<dbReference type="NCBIfam" id="NF006780">
    <property type="entry name" value="PRK09293.1-4"/>
    <property type="match status" value="1"/>
</dbReference>
<dbReference type="PANTHER" id="PTHR11556">
    <property type="entry name" value="FRUCTOSE-1,6-BISPHOSPHATASE-RELATED"/>
    <property type="match status" value="1"/>
</dbReference>
<dbReference type="PANTHER" id="PTHR11556:SF35">
    <property type="entry name" value="SEDOHEPTULOSE-1,7-BISPHOSPHATASE, CHLOROPLASTIC"/>
    <property type="match status" value="1"/>
</dbReference>
<dbReference type="Pfam" id="PF00316">
    <property type="entry name" value="FBPase"/>
    <property type="match status" value="1"/>
</dbReference>
<dbReference type="Pfam" id="PF18913">
    <property type="entry name" value="FBPase_C"/>
    <property type="match status" value="1"/>
</dbReference>
<dbReference type="PIRSF" id="PIRSF500210">
    <property type="entry name" value="FBPtase"/>
    <property type="match status" value="1"/>
</dbReference>
<dbReference type="PIRSF" id="PIRSF000904">
    <property type="entry name" value="FBPtase_SBPase"/>
    <property type="match status" value="1"/>
</dbReference>
<dbReference type="PRINTS" id="PR00115">
    <property type="entry name" value="F16BPHPHTASE"/>
</dbReference>
<dbReference type="SUPFAM" id="SSF56655">
    <property type="entry name" value="Carbohydrate phosphatase"/>
    <property type="match status" value="1"/>
</dbReference>
<dbReference type="PROSITE" id="PS00124">
    <property type="entry name" value="FBPASE"/>
    <property type="match status" value="1"/>
</dbReference>
<proteinExistence type="inferred from homology"/>
<comment type="catalytic activity">
    <reaction evidence="1">
        <text>beta-D-fructose 1,6-bisphosphate + H2O = beta-D-fructose 6-phosphate + phosphate</text>
        <dbReference type="Rhea" id="RHEA:11064"/>
        <dbReference type="ChEBI" id="CHEBI:15377"/>
        <dbReference type="ChEBI" id="CHEBI:32966"/>
        <dbReference type="ChEBI" id="CHEBI:43474"/>
        <dbReference type="ChEBI" id="CHEBI:57634"/>
        <dbReference type="EC" id="3.1.3.11"/>
    </reaction>
</comment>
<comment type="cofactor">
    <cofactor evidence="1">
        <name>Mg(2+)</name>
        <dbReference type="ChEBI" id="CHEBI:18420"/>
    </cofactor>
    <text evidence="1">Binds 2 magnesium ions per subunit.</text>
</comment>
<comment type="pathway">
    <text evidence="1">Carbohydrate biosynthesis; Calvin cycle.</text>
</comment>
<comment type="subunit">
    <text evidence="1">Homotetramer.</text>
</comment>
<comment type="subcellular location">
    <subcellularLocation>
        <location evidence="1">Cytoplasm</location>
    </subcellularLocation>
</comment>
<comment type="similarity">
    <text evidence="1">Belongs to the FBPase class 1 family.</text>
</comment>
<reference key="1">
    <citation type="submission" date="2006-03" db="EMBL/GenBank/DDBJ databases">
        <title>Complete sequence of Rhodopseudomonas palustris BisB18.</title>
        <authorList>
            <consortium name="US DOE Joint Genome Institute"/>
            <person name="Copeland A."/>
            <person name="Lucas S."/>
            <person name="Lapidus A."/>
            <person name="Barry K."/>
            <person name="Detter J.C."/>
            <person name="Glavina del Rio T."/>
            <person name="Hammon N."/>
            <person name="Israni S."/>
            <person name="Dalin E."/>
            <person name="Tice H."/>
            <person name="Pitluck S."/>
            <person name="Chain P."/>
            <person name="Malfatti S."/>
            <person name="Shin M."/>
            <person name="Vergez L."/>
            <person name="Schmutz J."/>
            <person name="Larimer F."/>
            <person name="Land M."/>
            <person name="Hauser L."/>
            <person name="Pelletier D.A."/>
            <person name="Kyrpides N."/>
            <person name="Anderson I."/>
            <person name="Oda Y."/>
            <person name="Harwood C.S."/>
            <person name="Richardson P."/>
        </authorList>
    </citation>
    <scope>NUCLEOTIDE SEQUENCE [LARGE SCALE GENOMIC DNA]</scope>
    <source>
        <strain>BisB18</strain>
    </source>
</reference>
<evidence type="ECO:0000255" key="1">
    <source>
        <dbReference type="HAMAP-Rule" id="MF_01855"/>
    </source>
</evidence>
<protein>
    <recommendedName>
        <fullName evidence="1">Fructose-1,6-bisphosphatase class 1</fullName>
        <shortName evidence="1">FBPase class 1</shortName>
        <ecNumber evidence="1">3.1.3.11</ecNumber>
    </recommendedName>
    <alternativeName>
        <fullName evidence="1">D-fructose-1,6-bisphosphate 1-phosphohydrolase class 1</fullName>
    </alternativeName>
</protein>
<feature type="chain" id="PRO_0000364676" description="Fructose-1,6-bisphosphatase class 1">
    <location>
        <begin position="1"/>
        <end position="344"/>
    </location>
</feature>
<feature type="binding site" evidence="1">
    <location>
        <position position="91"/>
    </location>
    <ligand>
        <name>Mg(2+)</name>
        <dbReference type="ChEBI" id="CHEBI:18420"/>
        <label>1</label>
    </ligand>
</feature>
<feature type="binding site" evidence="1">
    <location>
        <position position="110"/>
    </location>
    <ligand>
        <name>Mg(2+)</name>
        <dbReference type="ChEBI" id="CHEBI:18420"/>
        <label>1</label>
    </ligand>
</feature>
<feature type="binding site" evidence="1">
    <location>
        <position position="110"/>
    </location>
    <ligand>
        <name>Mg(2+)</name>
        <dbReference type="ChEBI" id="CHEBI:18420"/>
        <label>2</label>
    </ligand>
</feature>
<feature type="binding site" evidence="1">
    <location>
        <position position="112"/>
    </location>
    <ligand>
        <name>Mg(2+)</name>
        <dbReference type="ChEBI" id="CHEBI:18420"/>
        <label>1</label>
    </ligand>
</feature>
<feature type="binding site" evidence="1">
    <location>
        <begin position="113"/>
        <end position="116"/>
    </location>
    <ligand>
        <name>substrate</name>
    </ligand>
</feature>
<feature type="binding site" evidence="1">
    <location>
        <position position="113"/>
    </location>
    <ligand>
        <name>Mg(2+)</name>
        <dbReference type="ChEBI" id="CHEBI:18420"/>
        <label>2</label>
    </ligand>
</feature>
<feature type="binding site" evidence="1">
    <location>
        <position position="200"/>
    </location>
    <ligand>
        <name>substrate</name>
    </ligand>
</feature>
<feature type="binding site" evidence="1">
    <location>
        <position position="272"/>
    </location>
    <ligand>
        <name>Mg(2+)</name>
        <dbReference type="ChEBI" id="CHEBI:18420"/>
        <label>2</label>
    </ligand>
</feature>
<organism>
    <name type="scientific">Rhodopseudomonas palustris (strain BisB18)</name>
    <dbReference type="NCBI Taxonomy" id="316056"/>
    <lineage>
        <taxon>Bacteria</taxon>
        <taxon>Pseudomonadati</taxon>
        <taxon>Pseudomonadota</taxon>
        <taxon>Alphaproteobacteria</taxon>
        <taxon>Hyphomicrobiales</taxon>
        <taxon>Nitrobacteraceae</taxon>
        <taxon>Rhodopseudomonas</taxon>
    </lineage>
</organism>
<name>F16PA_RHOPB</name>
<keyword id="KW-0113">Calvin cycle</keyword>
<keyword id="KW-0119">Carbohydrate metabolism</keyword>
<keyword id="KW-0963">Cytoplasm</keyword>
<keyword id="KW-0378">Hydrolase</keyword>
<keyword id="KW-0460">Magnesium</keyword>
<keyword id="KW-0479">Metal-binding</keyword>